<gene>
    <name evidence="1" type="primary">pnp</name>
    <name type="ordered locus">Arad_0165</name>
</gene>
<comment type="function">
    <text evidence="1">Involved in mRNA degradation. Catalyzes the phosphorolysis of single-stranded polyribonucleotides processively in the 3'- to 5'-direction.</text>
</comment>
<comment type="catalytic activity">
    <reaction evidence="1">
        <text>RNA(n+1) + phosphate = RNA(n) + a ribonucleoside 5'-diphosphate</text>
        <dbReference type="Rhea" id="RHEA:22096"/>
        <dbReference type="Rhea" id="RHEA-COMP:14527"/>
        <dbReference type="Rhea" id="RHEA-COMP:17342"/>
        <dbReference type="ChEBI" id="CHEBI:43474"/>
        <dbReference type="ChEBI" id="CHEBI:57930"/>
        <dbReference type="ChEBI" id="CHEBI:140395"/>
        <dbReference type="EC" id="2.7.7.8"/>
    </reaction>
</comment>
<comment type="cofactor">
    <cofactor evidence="1">
        <name>Mg(2+)</name>
        <dbReference type="ChEBI" id="CHEBI:18420"/>
    </cofactor>
</comment>
<comment type="subcellular location">
    <subcellularLocation>
        <location evidence="1">Cytoplasm</location>
    </subcellularLocation>
</comment>
<comment type="similarity">
    <text evidence="1">Belongs to the polyribonucleotide nucleotidyltransferase family.</text>
</comment>
<accession>B9JGS9</accession>
<feature type="chain" id="PRO_1000185715" description="Polyribonucleotide nucleotidyltransferase">
    <location>
        <begin position="1"/>
        <end position="710"/>
    </location>
</feature>
<feature type="domain" description="KH" evidence="1">
    <location>
        <begin position="554"/>
        <end position="613"/>
    </location>
</feature>
<feature type="domain" description="S1 motif" evidence="1">
    <location>
        <begin position="623"/>
        <end position="691"/>
    </location>
</feature>
<feature type="binding site" evidence="1">
    <location>
        <position position="487"/>
    </location>
    <ligand>
        <name>Mg(2+)</name>
        <dbReference type="ChEBI" id="CHEBI:18420"/>
    </ligand>
</feature>
<feature type="binding site" evidence="1">
    <location>
        <position position="493"/>
    </location>
    <ligand>
        <name>Mg(2+)</name>
        <dbReference type="ChEBI" id="CHEBI:18420"/>
    </ligand>
</feature>
<name>PNP_RHIR8</name>
<dbReference type="EC" id="2.7.7.8" evidence="1"/>
<dbReference type="EMBL" id="CP000628">
    <property type="protein sequence ID" value="ACM24925.1"/>
    <property type="molecule type" value="Genomic_DNA"/>
</dbReference>
<dbReference type="RefSeq" id="WP_007690308.1">
    <property type="nucleotide sequence ID" value="NC_011985.1"/>
</dbReference>
<dbReference type="SMR" id="B9JGS9"/>
<dbReference type="STRING" id="311403.Arad_0165"/>
<dbReference type="GeneID" id="86850558"/>
<dbReference type="KEGG" id="ara:Arad_0165"/>
<dbReference type="eggNOG" id="COG1185">
    <property type="taxonomic scope" value="Bacteria"/>
</dbReference>
<dbReference type="HOGENOM" id="CLU_004217_2_2_5"/>
<dbReference type="Proteomes" id="UP000001600">
    <property type="component" value="Chromosome 1"/>
</dbReference>
<dbReference type="GO" id="GO:0005829">
    <property type="term" value="C:cytosol"/>
    <property type="evidence" value="ECO:0007669"/>
    <property type="project" value="TreeGrafter"/>
</dbReference>
<dbReference type="GO" id="GO:0000175">
    <property type="term" value="F:3'-5'-RNA exonuclease activity"/>
    <property type="evidence" value="ECO:0007669"/>
    <property type="project" value="TreeGrafter"/>
</dbReference>
<dbReference type="GO" id="GO:0000287">
    <property type="term" value="F:magnesium ion binding"/>
    <property type="evidence" value="ECO:0007669"/>
    <property type="project" value="UniProtKB-UniRule"/>
</dbReference>
<dbReference type="GO" id="GO:0004654">
    <property type="term" value="F:polyribonucleotide nucleotidyltransferase activity"/>
    <property type="evidence" value="ECO:0007669"/>
    <property type="project" value="UniProtKB-UniRule"/>
</dbReference>
<dbReference type="GO" id="GO:0003723">
    <property type="term" value="F:RNA binding"/>
    <property type="evidence" value="ECO:0007669"/>
    <property type="project" value="UniProtKB-UniRule"/>
</dbReference>
<dbReference type="GO" id="GO:0006402">
    <property type="term" value="P:mRNA catabolic process"/>
    <property type="evidence" value="ECO:0007669"/>
    <property type="project" value="UniProtKB-UniRule"/>
</dbReference>
<dbReference type="GO" id="GO:0006396">
    <property type="term" value="P:RNA processing"/>
    <property type="evidence" value="ECO:0007669"/>
    <property type="project" value="InterPro"/>
</dbReference>
<dbReference type="CDD" id="cd02393">
    <property type="entry name" value="KH-I_PNPase"/>
    <property type="match status" value="1"/>
</dbReference>
<dbReference type="CDD" id="cd11363">
    <property type="entry name" value="RNase_PH_PNPase_1"/>
    <property type="match status" value="1"/>
</dbReference>
<dbReference type="CDD" id="cd11364">
    <property type="entry name" value="RNase_PH_PNPase_2"/>
    <property type="match status" value="1"/>
</dbReference>
<dbReference type="CDD" id="cd04472">
    <property type="entry name" value="S1_PNPase"/>
    <property type="match status" value="1"/>
</dbReference>
<dbReference type="FunFam" id="2.40.50.140:FF:000107">
    <property type="entry name" value="Polyribonucleotide nucleotidyltransferase"/>
    <property type="match status" value="1"/>
</dbReference>
<dbReference type="FunFam" id="3.30.1370.10:FF:000001">
    <property type="entry name" value="Polyribonucleotide nucleotidyltransferase"/>
    <property type="match status" value="1"/>
</dbReference>
<dbReference type="FunFam" id="3.30.230.70:FF:000001">
    <property type="entry name" value="Polyribonucleotide nucleotidyltransferase"/>
    <property type="match status" value="1"/>
</dbReference>
<dbReference type="FunFam" id="3.30.230.70:FF:000002">
    <property type="entry name" value="Polyribonucleotide nucleotidyltransferase"/>
    <property type="match status" value="1"/>
</dbReference>
<dbReference type="Gene3D" id="3.30.230.70">
    <property type="entry name" value="GHMP Kinase, N-terminal domain"/>
    <property type="match status" value="2"/>
</dbReference>
<dbReference type="Gene3D" id="3.30.1370.10">
    <property type="entry name" value="K Homology domain, type 1"/>
    <property type="match status" value="1"/>
</dbReference>
<dbReference type="Gene3D" id="2.40.50.140">
    <property type="entry name" value="Nucleic acid-binding proteins"/>
    <property type="match status" value="1"/>
</dbReference>
<dbReference type="HAMAP" id="MF_01595">
    <property type="entry name" value="PNPase"/>
    <property type="match status" value="1"/>
</dbReference>
<dbReference type="InterPro" id="IPR001247">
    <property type="entry name" value="ExoRNase_PH_dom1"/>
</dbReference>
<dbReference type="InterPro" id="IPR015847">
    <property type="entry name" value="ExoRNase_PH_dom2"/>
</dbReference>
<dbReference type="InterPro" id="IPR036345">
    <property type="entry name" value="ExoRNase_PH_dom2_sf"/>
</dbReference>
<dbReference type="InterPro" id="IPR004087">
    <property type="entry name" value="KH_dom"/>
</dbReference>
<dbReference type="InterPro" id="IPR004088">
    <property type="entry name" value="KH_dom_type_1"/>
</dbReference>
<dbReference type="InterPro" id="IPR036612">
    <property type="entry name" value="KH_dom_type_1_sf"/>
</dbReference>
<dbReference type="InterPro" id="IPR012340">
    <property type="entry name" value="NA-bd_OB-fold"/>
</dbReference>
<dbReference type="InterPro" id="IPR012162">
    <property type="entry name" value="PNPase"/>
</dbReference>
<dbReference type="InterPro" id="IPR027408">
    <property type="entry name" value="PNPase/RNase_PH_dom_sf"/>
</dbReference>
<dbReference type="InterPro" id="IPR015848">
    <property type="entry name" value="PNPase_PH_RNA-bd_bac/org-type"/>
</dbReference>
<dbReference type="InterPro" id="IPR036456">
    <property type="entry name" value="PNPase_PH_RNA-bd_sf"/>
</dbReference>
<dbReference type="InterPro" id="IPR020568">
    <property type="entry name" value="Ribosomal_Su5_D2-typ_SF"/>
</dbReference>
<dbReference type="InterPro" id="IPR003029">
    <property type="entry name" value="S1_domain"/>
</dbReference>
<dbReference type="NCBIfam" id="TIGR03591">
    <property type="entry name" value="polynuc_phos"/>
    <property type="match status" value="1"/>
</dbReference>
<dbReference type="NCBIfam" id="NF008805">
    <property type="entry name" value="PRK11824.1"/>
    <property type="match status" value="1"/>
</dbReference>
<dbReference type="PANTHER" id="PTHR11252">
    <property type="entry name" value="POLYRIBONUCLEOTIDE NUCLEOTIDYLTRANSFERASE"/>
    <property type="match status" value="1"/>
</dbReference>
<dbReference type="PANTHER" id="PTHR11252:SF0">
    <property type="entry name" value="POLYRIBONUCLEOTIDE NUCLEOTIDYLTRANSFERASE 1, MITOCHONDRIAL"/>
    <property type="match status" value="1"/>
</dbReference>
<dbReference type="Pfam" id="PF00013">
    <property type="entry name" value="KH_1"/>
    <property type="match status" value="1"/>
</dbReference>
<dbReference type="Pfam" id="PF03726">
    <property type="entry name" value="PNPase"/>
    <property type="match status" value="1"/>
</dbReference>
<dbReference type="Pfam" id="PF01138">
    <property type="entry name" value="RNase_PH"/>
    <property type="match status" value="2"/>
</dbReference>
<dbReference type="Pfam" id="PF03725">
    <property type="entry name" value="RNase_PH_C"/>
    <property type="match status" value="2"/>
</dbReference>
<dbReference type="Pfam" id="PF00575">
    <property type="entry name" value="S1"/>
    <property type="match status" value="1"/>
</dbReference>
<dbReference type="PIRSF" id="PIRSF005499">
    <property type="entry name" value="PNPase"/>
    <property type="match status" value="1"/>
</dbReference>
<dbReference type="SMART" id="SM00322">
    <property type="entry name" value="KH"/>
    <property type="match status" value="1"/>
</dbReference>
<dbReference type="SMART" id="SM00316">
    <property type="entry name" value="S1"/>
    <property type="match status" value="1"/>
</dbReference>
<dbReference type="SUPFAM" id="SSF54791">
    <property type="entry name" value="Eukaryotic type KH-domain (KH-domain type I)"/>
    <property type="match status" value="1"/>
</dbReference>
<dbReference type="SUPFAM" id="SSF50249">
    <property type="entry name" value="Nucleic acid-binding proteins"/>
    <property type="match status" value="1"/>
</dbReference>
<dbReference type="SUPFAM" id="SSF46915">
    <property type="entry name" value="Polynucleotide phosphorylase/guanosine pentaphosphate synthase (PNPase/GPSI), domain 3"/>
    <property type="match status" value="1"/>
</dbReference>
<dbReference type="SUPFAM" id="SSF55666">
    <property type="entry name" value="Ribonuclease PH domain 2-like"/>
    <property type="match status" value="2"/>
</dbReference>
<dbReference type="SUPFAM" id="SSF54211">
    <property type="entry name" value="Ribosomal protein S5 domain 2-like"/>
    <property type="match status" value="2"/>
</dbReference>
<dbReference type="PROSITE" id="PS50084">
    <property type="entry name" value="KH_TYPE_1"/>
    <property type="match status" value="1"/>
</dbReference>
<dbReference type="PROSITE" id="PS50126">
    <property type="entry name" value="S1"/>
    <property type="match status" value="1"/>
</dbReference>
<protein>
    <recommendedName>
        <fullName evidence="1">Polyribonucleotide nucleotidyltransferase</fullName>
        <ecNumber evidence="1">2.7.7.8</ecNumber>
    </recommendedName>
    <alternativeName>
        <fullName evidence="1">Polynucleotide phosphorylase</fullName>
        <shortName evidence="1">PNPase</shortName>
    </alternativeName>
</protein>
<proteinExistence type="inferred from homology"/>
<keyword id="KW-0963">Cytoplasm</keyword>
<keyword id="KW-0460">Magnesium</keyword>
<keyword id="KW-0479">Metal-binding</keyword>
<keyword id="KW-0548">Nucleotidyltransferase</keyword>
<keyword id="KW-0694">RNA-binding</keyword>
<keyword id="KW-0808">Transferase</keyword>
<sequence length="710" mass="77111">MFDIHTVEIEWAGRPLKLETGKIARQADGAVMATYGETVVLATVVSAKSPKPGQDFFPLTVNYQEKTYAAGKIPGGYFKREGRPSEKETLVSRLIDRPIRPLFPEGYKNDTQVVVTVIQHDLENDPDILSMVATSAALTLSGVPFMGPIGGARVGYINGEYVLNPHLDEMDESSLDLVVAGTQEAVLMVESEAKELSEDVMLGAVMFGHRGFQPVIDAIIKLAEVAAKEPRDFQPEDHSALEAEMLSIAEGELRTAYKNTQKAERYAAVDAVKAKVKAHFFPEGVEPKYSAEVIGAVFKHLQAKIVRWNILDTKSRIDGRDLSTVRAIVSEVGVLPRTHGSSLFTRGETQAIVVATLGTGEDEQYVDSLTGMYKERFLLHYNFPPYSVGETGRMGSPGRREIGHGKLAWRAVRPMLPTAEQFPYTLRVVSEITESNGSSSMATVCGTSLALMDAGVPLAKPVAGIAMGLIKEDERFAVLSDILGDEDHLGDMDFKVAGTDGGITALQMDIKIEGITEEIMNVALNQAKGGRLHILGEMAKAISESRGQLGEFAPRIEVMNIPVDKIREVIGSGGKVIREIVEKTGAKINIEDDGTVKIASSSGKEIEAARKWIHSIVAEPEVGQIYEGTVVKTADFGAFVNFFGARDGLVHISQLASERVAKTQDVVKEGDKVWVKLLGFDERGKVRLSMKVVDQATGQELAAKKDDAAE</sequence>
<evidence type="ECO:0000255" key="1">
    <source>
        <dbReference type="HAMAP-Rule" id="MF_01595"/>
    </source>
</evidence>
<reference key="1">
    <citation type="journal article" date="2009" name="J. Bacteriol.">
        <title>Genome sequences of three Agrobacterium biovars help elucidate the evolution of multichromosome genomes in bacteria.</title>
        <authorList>
            <person name="Slater S.C."/>
            <person name="Goldman B.S."/>
            <person name="Goodner B."/>
            <person name="Setubal J.C."/>
            <person name="Farrand S.K."/>
            <person name="Nester E.W."/>
            <person name="Burr T.J."/>
            <person name="Banta L."/>
            <person name="Dickerman A.W."/>
            <person name="Paulsen I."/>
            <person name="Otten L."/>
            <person name="Suen G."/>
            <person name="Welch R."/>
            <person name="Almeida N.F."/>
            <person name="Arnold F."/>
            <person name="Burton O.T."/>
            <person name="Du Z."/>
            <person name="Ewing A."/>
            <person name="Godsy E."/>
            <person name="Heisel S."/>
            <person name="Houmiel K.L."/>
            <person name="Jhaveri J."/>
            <person name="Lu J."/>
            <person name="Miller N.M."/>
            <person name="Norton S."/>
            <person name="Chen Q."/>
            <person name="Phoolcharoen W."/>
            <person name="Ohlin V."/>
            <person name="Ondrusek D."/>
            <person name="Pride N."/>
            <person name="Stricklin S.L."/>
            <person name="Sun J."/>
            <person name="Wheeler C."/>
            <person name="Wilson L."/>
            <person name="Zhu H."/>
            <person name="Wood D.W."/>
        </authorList>
    </citation>
    <scope>NUCLEOTIDE SEQUENCE [LARGE SCALE GENOMIC DNA]</scope>
    <source>
        <strain>K84 / ATCC BAA-868</strain>
    </source>
</reference>
<organism>
    <name type="scientific">Rhizobium rhizogenes (strain K84 / ATCC BAA-868)</name>
    <name type="common">Agrobacterium radiobacter</name>
    <dbReference type="NCBI Taxonomy" id="311403"/>
    <lineage>
        <taxon>Bacteria</taxon>
        <taxon>Pseudomonadati</taxon>
        <taxon>Pseudomonadota</taxon>
        <taxon>Alphaproteobacteria</taxon>
        <taxon>Hyphomicrobiales</taxon>
        <taxon>Rhizobiaceae</taxon>
        <taxon>Rhizobium/Agrobacterium group</taxon>
        <taxon>Rhizobium</taxon>
    </lineage>
</organism>